<name>PYRR_STRMU</name>
<sequence>MKTKEIVDGVTMKRAITRMTYEIIERNKNLDNIVLAGIKTRGVFIARRIQERLKQIEGLDVPLGELDTKSFRDDVKVEENTTEMPVDITNRDVILVDDVLYTGRTIRAAIDNIVNLGRPARVSLAVLVDRGHRELPIRADYVGKNIPTSSSEEIVVNMVEIDDKDNVLLLAKEDSL</sequence>
<organism>
    <name type="scientific">Streptococcus mutans serotype c (strain ATCC 700610 / UA159)</name>
    <dbReference type="NCBI Taxonomy" id="210007"/>
    <lineage>
        <taxon>Bacteria</taxon>
        <taxon>Bacillati</taxon>
        <taxon>Bacillota</taxon>
        <taxon>Bacilli</taxon>
        <taxon>Lactobacillales</taxon>
        <taxon>Streptococcaceae</taxon>
        <taxon>Streptococcus</taxon>
    </lineage>
</organism>
<comment type="function">
    <text evidence="1">Regulates transcriptional attenuation of the pyrimidine nucleotide (pyr) operon by binding in a uridine-dependent manner to specific sites on pyr mRNA. This disrupts an antiterminator hairpin in the RNA and favors formation of a downstream transcription terminator, leading to a reduced expression of downstream genes.</text>
</comment>
<comment type="function">
    <text evidence="1">Also displays a weak uracil phosphoribosyltransferase activity which is not physiologically significant.</text>
</comment>
<comment type="catalytic activity">
    <reaction evidence="1">
        <text>UMP + diphosphate = 5-phospho-alpha-D-ribose 1-diphosphate + uracil</text>
        <dbReference type="Rhea" id="RHEA:13017"/>
        <dbReference type="ChEBI" id="CHEBI:17568"/>
        <dbReference type="ChEBI" id="CHEBI:33019"/>
        <dbReference type="ChEBI" id="CHEBI:57865"/>
        <dbReference type="ChEBI" id="CHEBI:58017"/>
        <dbReference type="EC" id="2.4.2.9"/>
    </reaction>
</comment>
<comment type="subunit">
    <text evidence="1">Homodimer and homohexamer; in equilibrium.</text>
</comment>
<comment type="similarity">
    <text evidence="1">Belongs to the purine/pyrimidine phosphoribosyltransferase family. PyrR subfamily.</text>
</comment>
<protein>
    <recommendedName>
        <fullName evidence="1">Bifunctional protein PyrR</fullName>
    </recommendedName>
    <domain>
        <recommendedName>
            <fullName evidence="1">Pyrimidine operon regulatory protein</fullName>
        </recommendedName>
    </domain>
    <domain>
        <recommendedName>
            <fullName evidence="1">Uracil phosphoribosyltransferase</fullName>
            <shortName evidence="1">UPRTase</shortName>
            <ecNumber evidence="1">2.4.2.9</ecNumber>
        </recommendedName>
    </domain>
</protein>
<reference key="1">
    <citation type="journal article" date="2002" name="Proc. Natl. Acad. Sci. U.S.A.">
        <title>Genome sequence of Streptococcus mutans UA159, a cariogenic dental pathogen.</title>
        <authorList>
            <person name="Ajdic D.J."/>
            <person name="McShan W.M."/>
            <person name="McLaughlin R.E."/>
            <person name="Savic G."/>
            <person name="Chang J."/>
            <person name="Carson M.B."/>
            <person name="Primeaux C."/>
            <person name="Tian R."/>
            <person name="Kenton S."/>
            <person name="Jia H.G."/>
            <person name="Lin S.P."/>
            <person name="Qian Y."/>
            <person name="Li S."/>
            <person name="Zhu H."/>
            <person name="Najar F.Z."/>
            <person name="Lai H."/>
            <person name="White J."/>
            <person name="Roe B.A."/>
            <person name="Ferretti J.J."/>
        </authorList>
    </citation>
    <scope>NUCLEOTIDE SEQUENCE [LARGE SCALE GENOMIC DNA]</scope>
    <source>
        <strain>ATCC 700610 / UA159</strain>
    </source>
</reference>
<evidence type="ECO:0000255" key="1">
    <source>
        <dbReference type="HAMAP-Rule" id="MF_01219"/>
    </source>
</evidence>
<gene>
    <name evidence="1" type="primary">pyrR</name>
    <name type="ordered locus">SMU_856</name>
</gene>
<feature type="chain" id="PRO_1000053868" description="Bifunctional protein PyrR">
    <location>
        <begin position="1"/>
        <end position="176"/>
    </location>
</feature>
<feature type="short sequence motif" description="PRPP-binding" evidence="1">
    <location>
        <begin position="93"/>
        <end position="105"/>
    </location>
</feature>
<keyword id="KW-0328">Glycosyltransferase</keyword>
<keyword id="KW-1185">Reference proteome</keyword>
<keyword id="KW-0694">RNA-binding</keyword>
<keyword id="KW-0804">Transcription</keyword>
<keyword id="KW-0805">Transcription regulation</keyword>
<keyword id="KW-0806">Transcription termination</keyword>
<keyword id="KW-0808">Transferase</keyword>
<accession>Q8DUP7</accession>
<dbReference type="EC" id="2.4.2.9" evidence="1"/>
<dbReference type="EMBL" id="AE014133">
    <property type="protein sequence ID" value="AAN58572.1"/>
    <property type="molecule type" value="Genomic_DNA"/>
</dbReference>
<dbReference type="RefSeq" id="NP_721266.1">
    <property type="nucleotide sequence ID" value="NC_004350.2"/>
</dbReference>
<dbReference type="RefSeq" id="WP_002262005.1">
    <property type="nucleotide sequence ID" value="NC_004350.2"/>
</dbReference>
<dbReference type="SMR" id="Q8DUP7"/>
<dbReference type="STRING" id="210007.SMU_856"/>
<dbReference type="GeneID" id="93859614"/>
<dbReference type="KEGG" id="smu:SMU_856"/>
<dbReference type="PATRIC" id="fig|210007.7.peg.763"/>
<dbReference type="eggNOG" id="COG2065">
    <property type="taxonomic scope" value="Bacteria"/>
</dbReference>
<dbReference type="HOGENOM" id="CLU_094234_2_1_9"/>
<dbReference type="OrthoDB" id="9802227at2"/>
<dbReference type="PhylomeDB" id="Q8DUP7"/>
<dbReference type="Proteomes" id="UP000002512">
    <property type="component" value="Chromosome"/>
</dbReference>
<dbReference type="GO" id="GO:0003723">
    <property type="term" value="F:RNA binding"/>
    <property type="evidence" value="ECO:0007669"/>
    <property type="project" value="UniProtKB-UniRule"/>
</dbReference>
<dbReference type="GO" id="GO:0004845">
    <property type="term" value="F:uracil phosphoribosyltransferase activity"/>
    <property type="evidence" value="ECO:0007669"/>
    <property type="project" value="UniProtKB-UniRule"/>
</dbReference>
<dbReference type="GO" id="GO:0006353">
    <property type="term" value="P:DNA-templated transcription termination"/>
    <property type="evidence" value="ECO:0007669"/>
    <property type="project" value="UniProtKB-UniRule"/>
</dbReference>
<dbReference type="CDD" id="cd06223">
    <property type="entry name" value="PRTases_typeI"/>
    <property type="match status" value="1"/>
</dbReference>
<dbReference type="FunFam" id="3.40.50.2020:FF:000020">
    <property type="entry name" value="Bifunctional protein PyrR"/>
    <property type="match status" value="1"/>
</dbReference>
<dbReference type="Gene3D" id="3.40.50.2020">
    <property type="match status" value="1"/>
</dbReference>
<dbReference type="HAMAP" id="MF_01219">
    <property type="entry name" value="PyrR"/>
    <property type="match status" value="1"/>
</dbReference>
<dbReference type="InterPro" id="IPR000836">
    <property type="entry name" value="PRibTrfase_dom"/>
</dbReference>
<dbReference type="InterPro" id="IPR029057">
    <property type="entry name" value="PRTase-like"/>
</dbReference>
<dbReference type="InterPro" id="IPR023050">
    <property type="entry name" value="PyrR"/>
</dbReference>
<dbReference type="InterPro" id="IPR050137">
    <property type="entry name" value="PyrR_bifunctional"/>
</dbReference>
<dbReference type="NCBIfam" id="NF003548">
    <property type="entry name" value="PRK05205.1-4"/>
    <property type="match status" value="1"/>
</dbReference>
<dbReference type="NCBIfam" id="NF003549">
    <property type="entry name" value="PRK05205.1-5"/>
    <property type="match status" value="1"/>
</dbReference>
<dbReference type="PANTHER" id="PTHR11608">
    <property type="entry name" value="BIFUNCTIONAL PROTEIN PYRR"/>
    <property type="match status" value="1"/>
</dbReference>
<dbReference type="PANTHER" id="PTHR11608:SF0">
    <property type="entry name" value="BIFUNCTIONAL PROTEIN PYRR"/>
    <property type="match status" value="1"/>
</dbReference>
<dbReference type="Pfam" id="PF00156">
    <property type="entry name" value="Pribosyltran"/>
    <property type="match status" value="1"/>
</dbReference>
<dbReference type="SUPFAM" id="SSF53271">
    <property type="entry name" value="PRTase-like"/>
    <property type="match status" value="1"/>
</dbReference>
<proteinExistence type="inferred from homology"/>